<accession>Q8KC69</accession>
<keyword id="KW-0963">Cytoplasm</keyword>
<keyword id="KW-0378">Hydrolase</keyword>
<keyword id="KW-0479">Metal-binding</keyword>
<keyword id="KW-0547">Nucleotide-binding</keyword>
<keyword id="KW-1185">Reference proteome</keyword>
<name>SURE_CHLTE</name>
<reference key="1">
    <citation type="journal article" date="2002" name="Proc. Natl. Acad. Sci. U.S.A.">
        <title>The complete genome sequence of Chlorobium tepidum TLS, a photosynthetic, anaerobic, green-sulfur bacterium.</title>
        <authorList>
            <person name="Eisen J.A."/>
            <person name="Nelson K.E."/>
            <person name="Paulsen I.T."/>
            <person name="Heidelberg J.F."/>
            <person name="Wu M."/>
            <person name="Dodson R.J."/>
            <person name="DeBoy R.T."/>
            <person name="Gwinn M.L."/>
            <person name="Nelson W.C."/>
            <person name="Haft D.H."/>
            <person name="Hickey E.K."/>
            <person name="Peterson J.D."/>
            <person name="Durkin A.S."/>
            <person name="Kolonay J.F."/>
            <person name="Yang F."/>
            <person name="Holt I.E."/>
            <person name="Umayam L.A."/>
            <person name="Mason T.M."/>
            <person name="Brenner M."/>
            <person name="Shea T.P."/>
            <person name="Parksey D.S."/>
            <person name="Nierman W.C."/>
            <person name="Feldblyum T.V."/>
            <person name="Hansen C.L."/>
            <person name="Craven M.B."/>
            <person name="Radune D."/>
            <person name="Vamathevan J.J."/>
            <person name="Khouri H.M."/>
            <person name="White O."/>
            <person name="Gruber T.M."/>
            <person name="Ketchum K.A."/>
            <person name="Venter J.C."/>
            <person name="Tettelin H."/>
            <person name="Bryant D.A."/>
            <person name="Fraser C.M."/>
        </authorList>
    </citation>
    <scope>NUCLEOTIDE SEQUENCE [LARGE SCALE GENOMIC DNA]</scope>
    <source>
        <strain>ATCC 49652 / DSM 12025 / NBRC 103806 / TLS</strain>
    </source>
</reference>
<comment type="function">
    <text evidence="1">Nucleotidase that shows phosphatase activity on nucleoside 5'-monophosphates.</text>
</comment>
<comment type="catalytic activity">
    <reaction evidence="1">
        <text>a ribonucleoside 5'-phosphate + H2O = a ribonucleoside + phosphate</text>
        <dbReference type="Rhea" id="RHEA:12484"/>
        <dbReference type="ChEBI" id="CHEBI:15377"/>
        <dbReference type="ChEBI" id="CHEBI:18254"/>
        <dbReference type="ChEBI" id="CHEBI:43474"/>
        <dbReference type="ChEBI" id="CHEBI:58043"/>
        <dbReference type="EC" id="3.1.3.5"/>
    </reaction>
</comment>
<comment type="cofactor">
    <cofactor evidence="1">
        <name>a divalent metal cation</name>
        <dbReference type="ChEBI" id="CHEBI:60240"/>
    </cofactor>
    <text evidence="1">Binds 1 divalent metal cation per subunit.</text>
</comment>
<comment type="subcellular location">
    <subcellularLocation>
        <location evidence="1">Cytoplasm</location>
    </subcellularLocation>
</comment>
<comment type="similarity">
    <text evidence="1">Belongs to the SurE nucleotidase family.</text>
</comment>
<sequence length="263" mass="29242">MTTKPQKPHILVCNDDGIEGLGLHALAASMKKLGSVTVVAPAEPQSGKSHGMTLGEPLRIRRYQKNNRFFGYTVSGTPVDCIKVALSHILDAKPDLIVSGINYGSNTAMNSLYSGTVAAAREGAIQNVPSLAFSLTTYENADFTYAAKFARQLAREVLRRGMPPDTILSANIPNVPEKEIRGILFTRQGRSRWEESTIERHDMYGNPYYWLAGSLQLHDNDLAEDEYAVRHNYVAVTPITCDMTDHRFRSELETWGLQNTIKK</sequence>
<gene>
    <name evidence="1" type="primary">surE</name>
    <name type="ordered locus">CT1557</name>
</gene>
<proteinExistence type="inferred from homology"/>
<dbReference type="EC" id="3.1.3.5" evidence="1"/>
<dbReference type="EMBL" id="AE006470">
    <property type="protein sequence ID" value="AAM72782.1"/>
    <property type="molecule type" value="Genomic_DNA"/>
</dbReference>
<dbReference type="RefSeq" id="NP_662440.1">
    <property type="nucleotide sequence ID" value="NC_002932.3"/>
</dbReference>
<dbReference type="RefSeq" id="WP_010933221.1">
    <property type="nucleotide sequence ID" value="NC_002932.3"/>
</dbReference>
<dbReference type="SMR" id="Q8KC69"/>
<dbReference type="STRING" id="194439.CT1557"/>
<dbReference type="EnsemblBacteria" id="AAM72782">
    <property type="protein sequence ID" value="AAM72782"/>
    <property type="gene ID" value="CT1557"/>
</dbReference>
<dbReference type="KEGG" id="cte:CT1557"/>
<dbReference type="PATRIC" id="fig|194439.7.peg.1410"/>
<dbReference type="eggNOG" id="COG0496">
    <property type="taxonomic scope" value="Bacteria"/>
</dbReference>
<dbReference type="HOGENOM" id="CLU_045192_1_0_10"/>
<dbReference type="OrthoDB" id="9780815at2"/>
<dbReference type="Proteomes" id="UP000001007">
    <property type="component" value="Chromosome"/>
</dbReference>
<dbReference type="GO" id="GO:0005737">
    <property type="term" value="C:cytoplasm"/>
    <property type="evidence" value="ECO:0007669"/>
    <property type="project" value="UniProtKB-SubCell"/>
</dbReference>
<dbReference type="GO" id="GO:0008254">
    <property type="term" value="F:3'-nucleotidase activity"/>
    <property type="evidence" value="ECO:0007669"/>
    <property type="project" value="TreeGrafter"/>
</dbReference>
<dbReference type="GO" id="GO:0008253">
    <property type="term" value="F:5'-nucleotidase activity"/>
    <property type="evidence" value="ECO:0007669"/>
    <property type="project" value="UniProtKB-UniRule"/>
</dbReference>
<dbReference type="GO" id="GO:0004309">
    <property type="term" value="F:exopolyphosphatase activity"/>
    <property type="evidence" value="ECO:0007669"/>
    <property type="project" value="TreeGrafter"/>
</dbReference>
<dbReference type="GO" id="GO:0046872">
    <property type="term" value="F:metal ion binding"/>
    <property type="evidence" value="ECO:0007669"/>
    <property type="project" value="UniProtKB-UniRule"/>
</dbReference>
<dbReference type="GO" id="GO:0000166">
    <property type="term" value="F:nucleotide binding"/>
    <property type="evidence" value="ECO:0007669"/>
    <property type="project" value="UniProtKB-KW"/>
</dbReference>
<dbReference type="Gene3D" id="3.40.1210.10">
    <property type="entry name" value="Survival protein SurE-like phosphatase/nucleotidase"/>
    <property type="match status" value="1"/>
</dbReference>
<dbReference type="HAMAP" id="MF_00060">
    <property type="entry name" value="SurE"/>
    <property type="match status" value="1"/>
</dbReference>
<dbReference type="InterPro" id="IPR030048">
    <property type="entry name" value="SurE"/>
</dbReference>
<dbReference type="InterPro" id="IPR002828">
    <property type="entry name" value="SurE-like_Pase/nucleotidase"/>
</dbReference>
<dbReference type="InterPro" id="IPR036523">
    <property type="entry name" value="SurE-like_sf"/>
</dbReference>
<dbReference type="NCBIfam" id="NF001490">
    <property type="entry name" value="PRK00346.1-4"/>
    <property type="match status" value="1"/>
</dbReference>
<dbReference type="NCBIfam" id="NF001492">
    <property type="entry name" value="PRK00346.2-2"/>
    <property type="match status" value="1"/>
</dbReference>
<dbReference type="NCBIfam" id="NF010542">
    <property type="entry name" value="PRK13932.1"/>
    <property type="match status" value="1"/>
</dbReference>
<dbReference type="NCBIfam" id="TIGR00087">
    <property type="entry name" value="surE"/>
    <property type="match status" value="1"/>
</dbReference>
<dbReference type="PANTHER" id="PTHR30457">
    <property type="entry name" value="5'-NUCLEOTIDASE SURE"/>
    <property type="match status" value="1"/>
</dbReference>
<dbReference type="PANTHER" id="PTHR30457:SF12">
    <property type="entry name" value="5'_3'-NUCLEOTIDASE SURE"/>
    <property type="match status" value="1"/>
</dbReference>
<dbReference type="Pfam" id="PF01975">
    <property type="entry name" value="SurE"/>
    <property type="match status" value="1"/>
</dbReference>
<dbReference type="SUPFAM" id="SSF64167">
    <property type="entry name" value="SurE-like"/>
    <property type="match status" value="1"/>
</dbReference>
<protein>
    <recommendedName>
        <fullName evidence="1">5'-nucleotidase SurE</fullName>
        <ecNumber evidence="1">3.1.3.5</ecNumber>
    </recommendedName>
    <alternativeName>
        <fullName evidence="1">Nucleoside 5'-monophosphate phosphohydrolase</fullName>
    </alternativeName>
</protein>
<feature type="chain" id="PRO_0000111803" description="5'-nucleotidase SurE">
    <location>
        <begin position="1"/>
        <end position="263"/>
    </location>
</feature>
<feature type="binding site" evidence="1">
    <location>
        <position position="15"/>
    </location>
    <ligand>
        <name>a divalent metal cation</name>
        <dbReference type="ChEBI" id="CHEBI:60240"/>
    </ligand>
</feature>
<feature type="binding site" evidence="1">
    <location>
        <position position="16"/>
    </location>
    <ligand>
        <name>a divalent metal cation</name>
        <dbReference type="ChEBI" id="CHEBI:60240"/>
    </ligand>
</feature>
<feature type="binding site" evidence="1">
    <location>
        <position position="46"/>
    </location>
    <ligand>
        <name>a divalent metal cation</name>
        <dbReference type="ChEBI" id="CHEBI:60240"/>
    </ligand>
</feature>
<feature type="binding site" evidence="1">
    <location>
        <position position="102"/>
    </location>
    <ligand>
        <name>a divalent metal cation</name>
        <dbReference type="ChEBI" id="CHEBI:60240"/>
    </ligand>
</feature>
<organism>
    <name type="scientific">Chlorobaculum tepidum (strain ATCC 49652 / DSM 12025 / NBRC 103806 / TLS)</name>
    <name type="common">Chlorobium tepidum</name>
    <dbReference type="NCBI Taxonomy" id="194439"/>
    <lineage>
        <taxon>Bacteria</taxon>
        <taxon>Pseudomonadati</taxon>
        <taxon>Chlorobiota</taxon>
        <taxon>Chlorobiia</taxon>
        <taxon>Chlorobiales</taxon>
        <taxon>Chlorobiaceae</taxon>
        <taxon>Chlorobaculum</taxon>
    </lineage>
</organism>
<evidence type="ECO:0000255" key="1">
    <source>
        <dbReference type="HAMAP-Rule" id="MF_00060"/>
    </source>
</evidence>